<gene>
    <name evidence="1" type="primary">hisC</name>
    <name type="ordered locus">XOO2257</name>
</gene>
<reference key="1">
    <citation type="journal article" date="2005" name="Nucleic Acids Res.">
        <title>The genome sequence of Xanthomonas oryzae pathovar oryzae KACC10331, the bacterial blight pathogen of rice.</title>
        <authorList>
            <person name="Lee B.-M."/>
            <person name="Park Y.-J."/>
            <person name="Park D.-S."/>
            <person name="Kang H.-W."/>
            <person name="Kim J.-G."/>
            <person name="Song E.-S."/>
            <person name="Park I.-C."/>
            <person name="Yoon U.-H."/>
            <person name="Hahn J.-H."/>
            <person name="Koo B.-S."/>
            <person name="Lee G.-B."/>
            <person name="Kim H."/>
            <person name="Park H.-S."/>
            <person name="Yoon K.-O."/>
            <person name="Kim J.-H."/>
            <person name="Jung C.-H."/>
            <person name="Koh N.-H."/>
            <person name="Seo J.-S."/>
            <person name="Go S.-J."/>
        </authorList>
    </citation>
    <scope>NUCLEOTIDE SEQUENCE [LARGE SCALE GENOMIC DNA]</scope>
    <source>
        <strain>KACC10331 / KXO85</strain>
    </source>
</reference>
<evidence type="ECO:0000255" key="1">
    <source>
        <dbReference type="HAMAP-Rule" id="MF_01023"/>
    </source>
</evidence>
<evidence type="ECO:0000305" key="2"/>
<accession>Q5H0L0</accession>
<dbReference type="EC" id="2.6.1.9" evidence="1"/>
<dbReference type="EMBL" id="AE013598">
    <property type="protein sequence ID" value="AAW75511.1"/>
    <property type="status" value="ALT_INIT"/>
    <property type="molecule type" value="Genomic_DNA"/>
</dbReference>
<dbReference type="SMR" id="Q5H0L0"/>
<dbReference type="STRING" id="291331.XOO2257"/>
<dbReference type="KEGG" id="xoo:XOO2257"/>
<dbReference type="PATRIC" id="fig|291331.8.peg.2494"/>
<dbReference type="HOGENOM" id="CLU_017584_3_1_6"/>
<dbReference type="UniPathway" id="UPA00031">
    <property type="reaction ID" value="UER00012"/>
</dbReference>
<dbReference type="Proteomes" id="UP000006735">
    <property type="component" value="Chromosome"/>
</dbReference>
<dbReference type="GO" id="GO:0004400">
    <property type="term" value="F:histidinol-phosphate transaminase activity"/>
    <property type="evidence" value="ECO:0007669"/>
    <property type="project" value="UniProtKB-UniRule"/>
</dbReference>
<dbReference type="GO" id="GO:0030170">
    <property type="term" value="F:pyridoxal phosphate binding"/>
    <property type="evidence" value="ECO:0007669"/>
    <property type="project" value="InterPro"/>
</dbReference>
<dbReference type="GO" id="GO:0000105">
    <property type="term" value="P:L-histidine biosynthetic process"/>
    <property type="evidence" value="ECO:0007669"/>
    <property type="project" value="UniProtKB-UniRule"/>
</dbReference>
<dbReference type="CDD" id="cd00609">
    <property type="entry name" value="AAT_like"/>
    <property type="match status" value="1"/>
</dbReference>
<dbReference type="Gene3D" id="3.90.1150.10">
    <property type="entry name" value="Aspartate Aminotransferase, domain 1"/>
    <property type="match status" value="1"/>
</dbReference>
<dbReference type="Gene3D" id="3.40.640.10">
    <property type="entry name" value="Type I PLP-dependent aspartate aminotransferase-like (Major domain)"/>
    <property type="match status" value="1"/>
</dbReference>
<dbReference type="HAMAP" id="MF_01023">
    <property type="entry name" value="HisC_aminotrans_2"/>
    <property type="match status" value="1"/>
</dbReference>
<dbReference type="InterPro" id="IPR004839">
    <property type="entry name" value="Aminotransferase_I/II_large"/>
</dbReference>
<dbReference type="InterPro" id="IPR005861">
    <property type="entry name" value="HisP_aminotrans"/>
</dbReference>
<dbReference type="InterPro" id="IPR015424">
    <property type="entry name" value="PyrdxlP-dep_Trfase"/>
</dbReference>
<dbReference type="InterPro" id="IPR015421">
    <property type="entry name" value="PyrdxlP-dep_Trfase_major"/>
</dbReference>
<dbReference type="InterPro" id="IPR015422">
    <property type="entry name" value="PyrdxlP-dep_Trfase_small"/>
</dbReference>
<dbReference type="NCBIfam" id="TIGR01141">
    <property type="entry name" value="hisC"/>
    <property type="match status" value="1"/>
</dbReference>
<dbReference type="PANTHER" id="PTHR42885:SF2">
    <property type="entry name" value="HISTIDINOL-PHOSPHATE AMINOTRANSFERASE"/>
    <property type="match status" value="1"/>
</dbReference>
<dbReference type="PANTHER" id="PTHR42885">
    <property type="entry name" value="HISTIDINOL-PHOSPHATE AMINOTRANSFERASE-RELATED"/>
    <property type="match status" value="1"/>
</dbReference>
<dbReference type="Pfam" id="PF00155">
    <property type="entry name" value="Aminotran_1_2"/>
    <property type="match status" value="1"/>
</dbReference>
<dbReference type="SUPFAM" id="SSF53383">
    <property type="entry name" value="PLP-dependent transferases"/>
    <property type="match status" value="1"/>
</dbReference>
<proteinExistence type="inferred from homology"/>
<comment type="catalytic activity">
    <reaction evidence="1">
        <text>L-histidinol phosphate + 2-oxoglutarate = 3-(imidazol-4-yl)-2-oxopropyl phosphate + L-glutamate</text>
        <dbReference type="Rhea" id="RHEA:23744"/>
        <dbReference type="ChEBI" id="CHEBI:16810"/>
        <dbReference type="ChEBI" id="CHEBI:29985"/>
        <dbReference type="ChEBI" id="CHEBI:57766"/>
        <dbReference type="ChEBI" id="CHEBI:57980"/>
        <dbReference type="EC" id="2.6.1.9"/>
    </reaction>
</comment>
<comment type="cofactor">
    <cofactor evidence="1">
        <name>pyridoxal 5'-phosphate</name>
        <dbReference type="ChEBI" id="CHEBI:597326"/>
    </cofactor>
</comment>
<comment type="pathway">
    <text evidence="1">Amino-acid biosynthesis; L-histidine biosynthesis; L-histidine from 5-phospho-alpha-D-ribose 1-diphosphate: step 7/9.</text>
</comment>
<comment type="subunit">
    <text evidence="1">Homodimer.</text>
</comment>
<comment type="similarity">
    <text evidence="1">Belongs to the class-II pyridoxal-phosphate-dependent aminotransferase family. Histidinol-phosphate aminotransferase subfamily.</text>
</comment>
<comment type="sequence caution" evidence="2">
    <conflict type="erroneous initiation">
        <sequence resource="EMBL-CDS" id="AAW75511"/>
    </conflict>
</comment>
<protein>
    <recommendedName>
        <fullName evidence="1">Histidinol-phosphate aminotransferase</fullName>
        <ecNumber evidence="1">2.6.1.9</ecNumber>
    </recommendedName>
    <alternativeName>
        <fullName evidence="1">Imidazole acetol-phosphate transaminase</fullName>
    </alternativeName>
</protein>
<keyword id="KW-0028">Amino-acid biosynthesis</keyword>
<keyword id="KW-0032">Aminotransferase</keyword>
<keyword id="KW-0368">Histidine biosynthesis</keyword>
<keyword id="KW-0663">Pyridoxal phosphate</keyword>
<keyword id="KW-1185">Reference proteome</keyword>
<keyword id="KW-0808">Transferase</keyword>
<sequence length="363" mass="38624">MSTSSILHLVREDLRAFAGYSSARTSALQGDVWLNANESAWGNPADPSASTRRYPDPQPQGLRSALAALYGCAPEQLLIGRGSDEAIDLLVRGLCVPERDAVLVTPPVFGMYAVCARLQNAPLVDVPLVDVPDGFHADIPAIVAAALASNAKLVFLCSPSNPAGSAIALDQIEPALQALQGKALVVVDEAYGEFSEVPSAVGLLARYDNLAVLRTLSKAHALAAARIGTLIANAELIAVLRRCQAPYPVPTPCAAMAEQALSAPALEVTRRRIAEVRSERARVHKALVQLPGVRQVYPSQGNFLLVRFDDAEAAFQALLEAGVVVRDQRAVPRLSDALRITLGTHEQNERVLSALQRTQEAAA</sequence>
<name>HIS8_XANOR</name>
<feature type="chain" id="PRO_0000153484" description="Histidinol-phosphate aminotransferase">
    <location>
        <begin position="1"/>
        <end position="363"/>
    </location>
</feature>
<feature type="modified residue" description="N6-(pyridoxal phosphate)lysine" evidence="1">
    <location>
        <position position="218"/>
    </location>
</feature>
<organism>
    <name type="scientific">Xanthomonas oryzae pv. oryzae (strain KACC10331 / KXO85)</name>
    <dbReference type="NCBI Taxonomy" id="291331"/>
    <lineage>
        <taxon>Bacteria</taxon>
        <taxon>Pseudomonadati</taxon>
        <taxon>Pseudomonadota</taxon>
        <taxon>Gammaproteobacteria</taxon>
        <taxon>Lysobacterales</taxon>
        <taxon>Lysobacteraceae</taxon>
        <taxon>Xanthomonas</taxon>
    </lineage>
</organism>